<accession>Q9PE70</accession>
<proteinExistence type="inferred from homology"/>
<organism>
    <name type="scientific">Xylella fastidiosa (strain 9a5c)</name>
    <dbReference type="NCBI Taxonomy" id="160492"/>
    <lineage>
        <taxon>Bacteria</taxon>
        <taxon>Pseudomonadati</taxon>
        <taxon>Pseudomonadota</taxon>
        <taxon>Gammaproteobacteria</taxon>
        <taxon>Lysobacterales</taxon>
        <taxon>Lysobacteraceae</taxon>
        <taxon>Xylella</taxon>
    </lineage>
</organism>
<sequence length="239" mass="26670">MGHKVHPIGIRLGISADWNSKWYANKAEFAGYLAADLKVRQVLRKKMSQAGISKILIERPSNTACVSMHVARPGVVIGKRGEDIEMLRKQVSDIMGVSVHINVIEVRKPELDAQLVAESVAQQLERRIMFRRAMKRSVGNAMRLGALGIKISVAGRLNGAEIARSEWYREGRVPLQTLRADIGYGFSEAHTNYGVTGVKVLIYHGDIFSFSSVGQEKQDDISRGDRNADRSSRRSREVR</sequence>
<comment type="function">
    <text evidence="1">Binds the lower part of the 30S subunit head. Binds mRNA in the 70S ribosome, positioning it for translation.</text>
</comment>
<comment type="subunit">
    <text evidence="1">Part of the 30S ribosomal subunit. Forms a tight complex with proteins S10 and S14.</text>
</comment>
<comment type="similarity">
    <text evidence="1">Belongs to the universal ribosomal protein uS3 family.</text>
</comment>
<evidence type="ECO:0000255" key="1">
    <source>
        <dbReference type="HAMAP-Rule" id="MF_01309"/>
    </source>
</evidence>
<evidence type="ECO:0000256" key="2">
    <source>
        <dbReference type="SAM" id="MobiDB-lite"/>
    </source>
</evidence>
<evidence type="ECO:0000305" key="3"/>
<dbReference type="EMBL" id="AE003849">
    <property type="protein sequence ID" value="AAF83968.1"/>
    <property type="molecule type" value="Genomic_DNA"/>
</dbReference>
<dbReference type="PIR" id="F82717">
    <property type="entry name" value="F82717"/>
</dbReference>
<dbReference type="RefSeq" id="WP_010893674.1">
    <property type="nucleotide sequence ID" value="NC_002488.3"/>
</dbReference>
<dbReference type="SMR" id="Q9PE70"/>
<dbReference type="STRING" id="160492.XF_1158"/>
<dbReference type="KEGG" id="xfa:XF_1158"/>
<dbReference type="eggNOG" id="COG0092">
    <property type="taxonomic scope" value="Bacteria"/>
</dbReference>
<dbReference type="HOGENOM" id="CLU_058591_0_2_6"/>
<dbReference type="Proteomes" id="UP000000812">
    <property type="component" value="Chromosome"/>
</dbReference>
<dbReference type="GO" id="GO:0022627">
    <property type="term" value="C:cytosolic small ribosomal subunit"/>
    <property type="evidence" value="ECO:0007669"/>
    <property type="project" value="TreeGrafter"/>
</dbReference>
<dbReference type="GO" id="GO:0003729">
    <property type="term" value="F:mRNA binding"/>
    <property type="evidence" value="ECO:0007669"/>
    <property type="project" value="UniProtKB-UniRule"/>
</dbReference>
<dbReference type="GO" id="GO:0019843">
    <property type="term" value="F:rRNA binding"/>
    <property type="evidence" value="ECO:0007669"/>
    <property type="project" value="UniProtKB-UniRule"/>
</dbReference>
<dbReference type="GO" id="GO:0003735">
    <property type="term" value="F:structural constituent of ribosome"/>
    <property type="evidence" value="ECO:0007669"/>
    <property type="project" value="InterPro"/>
</dbReference>
<dbReference type="GO" id="GO:0006412">
    <property type="term" value="P:translation"/>
    <property type="evidence" value="ECO:0007669"/>
    <property type="project" value="UniProtKB-UniRule"/>
</dbReference>
<dbReference type="CDD" id="cd02412">
    <property type="entry name" value="KH-II_30S_S3"/>
    <property type="match status" value="1"/>
</dbReference>
<dbReference type="FunFam" id="3.30.300.20:FF:000001">
    <property type="entry name" value="30S ribosomal protein S3"/>
    <property type="match status" value="1"/>
</dbReference>
<dbReference type="Gene3D" id="3.30.300.20">
    <property type="match status" value="1"/>
</dbReference>
<dbReference type="Gene3D" id="3.30.1140.32">
    <property type="entry name" value="Ribosomal protein S3, C-terminal domain"/>
    <property type="match status" value="1"/>
</dbReference>
<dbReference type="HAMAP" id="MF_01309_B">
    <property type="entry name" value="Ribosomal_uS3_B"/>
    <property type="match status" value="1"/>
</dbReference>
<dbReference type="InterPro" id="IPR004087">
    <property type="entry name" value="KH_dom"/>
</dbReference>
<dbReference type="InterPro" id="IPR015946">
    <property type="entry name" value="KH_dom-like_a/b"/>
</dbReference>
<dbReference type="InterPro" id="IPR004044">
    <property type="entry name" value="KH_dom_type_2"/>
</dbReference>
<dbReference type="InterPro" id="IPR009019">
    <property type="entry name" value="KH_sf_prok-type"/>
</dbReference>
<dbReference type="InterPro" id="IPR036419">
    <property type="entry name" value="Ribosomal_S3_C_sf"/>
</dbReference>
<dbReference type="InterPro" id="IPR005704">
    <property type="entry name" value="Ribosomal_uS3_bac-typ"/>
</dbReference>
<dbReference type="InterPro" id="IPR001351">
    <property type="entry name" value="Ribosomal_uS3_C"/>
</dbReference>
<dbReference type="NCBIfam" id="TIGR01009">
    <property type="entry name" value="rpsC_bact"/>
    <property type="match status" value="1"/>
</dbReference>
<dbReference type="PANTHER" id="PTHR11760">
    <property type="entry name" value="30S/40S RIBOSOMAL PROTEIN S3"/>
    <property type="match status" value="1"/>
</dbReference>
<dbReference type="PANTHER" id="PTHR11760:SF19">
    <property type="entry name" value="SMALL RIBOSOMAL SUBUNIT PROTEIN US3C"/>
    <property type="match status" value="1"/>
</dbReference>
<dbReference type="Pfam" id="PF07650">
    <property type="entry name" value="KH_2"/>
    <property type="match status" value="1"/>
</dbReference>
<dbReference type="Pfam" id="PF00189">
    <property type="entry name" value="Ribosomal_S3_C"/>
    <property type="match status" value="1"/>
</dbReference>
<dbReference type="SMART" id="SM00322">
    <property type="entry name" value="KH"/>
    <property type="match status" value="1"/>
</dbReference>
<dbReference type="SUPFAM" id="SSF54814">
    <property type="entry name" value="Prokaryotic type KH domain (KH-domain type II)"/>
    <property type="match status" value="1"/>
</dbReference>
<dbReference type="SUPFAM" id="SSF54821">
    <property type="entry name" value="Ribosomal protein S3 C-terminal domain"/>
    <property type="match status" value="1"/>
</dbReference>
<dbReference type="PROSITE" id="PS50823">
    <property type="entry name" value="KH_TYPE_2"/>
    <property type="match status" value="1"/>
</dbReference>
<name>RS3_XYLFA</name>
<keyword id="KW-0687">Ribonucleoprotein</keyword>
<keyword id="KW-0689">Ribosomal protein</keyword>
<keyword id="KW-0694">RNA-binding</keyword>
<keyword id="KW-0699">rRNA-binding</keyword>
<gene>
    <name evidence="1" type="primary">rpsC</name>
    <name type="ordered locus">XF_1158</name>
</gene>
<feature type="chain" id="PRO_0000130239" description="Small ribosomal subunit protein uS3">
    <location>
        <begin position="1"/>
        <end position="239"/>
    </location>
</feature>
<feature type="domain" description="KH type-2" evidence="1">
    <location>
        <begin position="39"/>
        <end position="107"/>
    </location>
</feature>
<feature type="region of interest" description="Disordered" evidence="2">
    <location>
        <begin position="217"/>
        <end position="239"/>
    </location>
</feature>
<reference key="1">
    <citation type="journal article" date="2000" name="Nature">
        <title>The genome sequence of the plant pathogen Xylella fastidiosa.</title>
        <authorList>
            <person name="Simpson A.J.G."/>
            <person name="Reinach F.C."/>
            <person name="Arruda P."/>
            <person name="Abreu F.A."/>
            <person name="Acencio M."/>
            <person name="Alvarenga R."/>
            <person name="Alves L.M.C."/>
            <person name="Araya J.E."/>
            <person name="Baia G.S."/>
            <person name="Baptista C.S."/>
            <person name="Barros M.H."/>
            <person name="Bonaccorsi E.D."/>
            <person name="Bordin S."/>
            <person name="Bove J.M."/>
            <person name="Briones M.R.S."/>
            <person name="Bueno M.R.P."/>
            <person name="Camargo A.A."/>
            <person name="Camargo L.E.A."/>
            <person name="Carraro D.M."/>
            <person name="Carrer H."/>
            <person name="Colauto N.B."/>
            <person name="Colombo C."/>
            <person name="Costa F.F."/>
            <person name="Costa M.C.R."/>
            <person name="Costa-Neto C.M."/>
            <person name="Coutinho L.L."/>
            <person name="Cristofani M."/>
            <person name="Dias-Neto E."/>
            <person name="Docena C."/>
            <person name="El-Dorry H."/>
            <person name="Facincani A.P."/>
            <person name="Ferreira A.J.S."/>
            <person name="Ferreira V.C.A."/>
            <person name="Ferro J.A."/>
            <person name="Fraga J.S."/>
            <person name="Franca S.C."/>
            <person name="Franco M.C."/>
            <person name="Frohme M."/>
            <person name="Furlan L.R."/>
            <person name="Garnier M."/>
            <person name="Goldman G.H."/>
            <person name="Goldman M.H.S."/>
            <person name="Gomes S.L."/>
            <person name="Gruber A."/>
            <person name="Ho P.L."/>
            <person name="Hoheisel J.D."/>
            <person name="Junqueira M.L."/>
            <person name="Kemper E.L."/>
            <person name="Kitajima J.P."/>
            <person name="Krieger J.E."/>
            <person name="Kuramae E.E."/>
            <person name="Laigret F."/>
            <person name="Lambais M.R."/>
            <person name="Leite L.C.C."/>
            <person name="Lemos E.G.M."/>
            <person name="Lemos M.V.F."/>
            <person name="Lopes S.A."/>
            <person name="Lopes C.R."/>
            <person name="Machado J.A."/>
            <person name="Machado M.A."/>
            <person name="Madeira A.M.B.N."/>
            <person name="Madeira H.M.F."/>
            <person name="Marino C.L."/>
            <person name="Marques M.V."/>
            <person name="Martins E.A.L."/>
            <person name="Martins E.M.F."/>
            <person name="Matsukuma A.Y."/>
            <person name="Menck C.F.M."/>
            <person name="Miracca E.C."/>
            <person name="Miyaki C.Y."/>
            <person name="Monteiro-Vitorello C.B."/>
            <person name="Moon D.H."/>
            <person name="Nagai M.A."/>
            <person name="Nascimento A.L.T.O."/>
            <person name="Netto L.E.S."/>
            <person name="Nhani A. Jr."/>
            <person name="Nobrega F.G."/>
            <person name="Nunes L.R."/>
            <person name="Oliveira M.A."/>
            <person name="de Oliveira M.C."/>
            <person name="de Oliveira R.C."/>
            <person name="Palmieri D.A."/>
            <person name="Paris A."/>
            <person name="Peixoto B.R."/>
            <person name="Pereira G.A.G."/>
            <person name="Pereira H.A. Jr."/>
            <person name="Pesquero J.B."/>
            <person name="Quaggio R.B."/>
            <person name="Roberto P.G."/>
            <person name="Rodrigues V."/>
            <person name="de Rosa A.J.M."/>
            <person name="de Rosa V.E. Jr."/>
            <person name="de Sa R.G."/>
            <person name="Santelli R.V."/>
            <person name="Sawasaki H.E."/>
            <person name="da Silva A.C.R."/>
            <person name="da Silva A.M."/>
            <person name="da Silva F.R."/>
            <person name="Silva W.A. Jr."/>
            <person name="da Silveira J.F."/>
            <person name="Silvestri M.L.Z."/>
            <person name="Siqueira W.J."/>
            <person name="de Souza A.A."/>
            <person name="de Souza A.P."/>
            <person name="Terenzi M.F."/>
            <person name="Truffi D."/>
            <person name="Tsai S.M."/>
            <person name="Tsuhako M.H."/>
            <person name="Vallada H."/>
            <person name="Van Sluys M.A."/>
            <person name="Verjovski-Almeida S."/>
            <person name="Vettore A.L."/>
            <person name="Zago M.A."/>
            <person name="Zatz M."/>
            <person name="Meidanis J."/>
            <person name="Setubal J.C."/>
        </authorList>
    </citation>
    <scope>NUCLEOTIDE SEQUENCE [LARGE SCALE GENOMIC DNA]</scope>
    <source>
        <strain>9a5c</strain>
    </source>
</reference>
<protein>
    <recommendedName>
        <fullName evidence="1">Small ribosomal subunit protein uS3</fullName>
    </recommendedName>
    <alternativeName>
        <fullName evidence="3">30S ribosomal protein S3</fullName>
    </alternativeName>
</protein>